<gene>
    <name evidence="1" type="primary">atpF</name>
    <name type="ordered locus">Pfl01_5734</name>
</gene>
<evidence type="ECO:0000255" key="1">
    <source>
        <dbReference type="HAMAP-Rule" id="MF_01398"/>
    </source>
</evidence>
<name>ATPF_PSEPF</name>
<reference key="1">
    <citation type="journal article" date="2009" name="Genome Biol.">
        <title>Genomic and genetic analyses of diversity and plant interactions of Pseudomonas fluorescens.</title>
        <authorList>
            <person name="Silby M.W."/>
            <person name="Cerdeno-Tarraga A.M."/>
            <person name="Vernikos G.S."/>
            <person name="Giddens S.R."/>
            <person name="Jackson R.W."/>
            <person name="Preston G.M."/>
            <person name="Zhang X.-X."/>
            <person name="Moon C.D."/>
            <person name="Gehrig S.M."/>
            <person name="Godfrey S.A.C."/>
            <person name="Knight C.G."/>
            <person name="Malone J.G."/>
            <person name="Robinson Z."/>
            <person name="Spiers A.J."/>
            <person name="Harris S."/>
            <person name="Challis G.L."/>
            <person name="Yaxley A.M."/>
            <person name="Harris D."/>
            <person name="Seeger K."/>
            <person name="Murphy L."/>
            <person name="Rutter S."/>
            <person name="Squares R."/>
            <person name="Quail M.A."/>
            <person name="Saunders E."/>
            <person name="Mavromatis K."/>
            <person name="Brettin T.S."/>
            <person name="Bentley S.D."/>
            <person name="Hothersall J."/>
            <person name="Stephens E."/>
            <person name="Thomas C.M."/>
            <person name="Parkhill J."/>
            <person name="Levy S.B."/>
            <person name="Rainey P.B."/>
            <person name="Thomson N.R."/>
        </authorList>
    </citation>
    <scope>NUCLEOTIDE SEQUENCE [LARGE SCALE GENOMIC DNA]</scope>
    <source>
        <strain>Pf0-1</strain>
    </source>
</reference>
<comment type="function">
    <text evidence="1">F(1)F(0) ATP synthase produces ATP from ADP in the presence of a proton or sodium gradient. F-type ATPases consist of two structural domains, F(1) containing the extramembraneous catalytic core and F(0) containing the membrane proton channel, linked together by a central stalk and a peripheral stalk. During catalysis, ATP synthesis in the catalytic domain of F(1) is coupled via a rotary mechanism of the central stalk subunits to proton translocation.</text>
</comment>
<comment type="function">
    <text evidence="1">Component of the F(0) channel, it forms part of the peripheral stalk, linking F(1) to F(0).</text>
</comment>
<comment type="subunit">
    <text evidence="1">F-type ATPases have 2 components, F(1) - the catalytic core - and F(0) - the membrane proton channel. F(1) has five subunits: alpha(3), beta(3), gamma(1), delta(1), epsilon(1). F(0) has three main subunits: a(1), b(2) and c(10-14). The alpha and beta chains form an alternating ring which encloses part of the gamma chain. F(1) is attached to F(0) by a central stalk formed by the gamma and epsilon chains, while a peripheral stalk is formed by the delta and b chains.</text>
</comment>
<comment type="subcellular location">
    <subcellularLocation>
        <location evidence="1">Cell inner membrane</location>
        <topology evidence="1">Single-pass membrane protein</topology>
    </subcellularLocation>
</comment>
<comment type="similarity">
    <text evidence="1">Belongs to the ATPase B chain family.</text>
</comment>
<sequence length="156" mass="16975">MNINATLIGQSVAFLIFVLFCMKFVWPPVIAALHERQKKIADGLDAASRAARDLELAQEKAGQQLREAKAQAAEIIEQAKKRGNQIVEEAVEKARIDADRVKVQAQAEIEQELNSVKDKLRAQVGLLAVGGAEKILGATIDQNAHAELVNQLAAEI</sequence>
<accession>Q3K437</accession>
<keyword id="KW-0066">ATP synthesis</keyword>
<keyword id="KW-0997">Cell inner membrane</keyword>
<keyword id="KW-1003">Cell membrane</keyword>
<keyword id="KW-0138">CF(0)</keyword>
<keyword id="KW-0375">Hydrogen ion transport</keyword>
<keyword id="KW-0406">Ion transport</keyword>
<keyword id="KW-0472">Membrane</keyword>
<keyword id="KW-0812">Transmembrane</keyword>
<keyword id="KW-1133">Transmembrane helix</keyword>
<keyword id="KW-0813">Transport</keyword>
<proteinExistence type="inferred from homology"/>
<organism>
    <name type="scientific">Pseudomonas fluorescens (strain Pf0-1)</name>
    <dbReference type="NCBI Taxonomy" id="205922"/>
    <lineage>
        <taxon>Bacteria</taxon>
        <taxon>Pseudomonadati</taxon>
        <taxon>Pseudomonadota</taxon>
        <taxon>Gammaproteobacteria</taxon>
        <taxon>Pseudomonadales</taxon>
        <taxon>Pseudomonadaceae</taxon>
        <taxon>Pseudomonas</taxon>
    </lineage>
</organism>
<dbReference type="EMBL" id="CP000094">
    <property type="protein sequence ID" value="ABA77467.1"/>
    <property type="molecule type" value="Genomic_DNA"/>
</dbReference>
<dbReference type="RefSeq" id="WP_011336718.1">
    <property type="nucleotide sequence ID" value="NC_007492.2"/>
</dbReference>
<dbReference type="SMR" id="Q3K437"/>
<dbReference type="KEGG" id="pfo:Pfl01_5734"/>
<dbReference type="eggNOG" id="COG0711">
    <property type="taxonomic scope" value="Bacteria"/>
</dbReference>
<dbReference type="HOGENOM" id="CLU_079215_4_5_6"/>
<dbReference type="Proteomes" id="UP000002704">
    <property type="component" value="Chromosome"/>
</dbReference>
<dbReference type="GO" id="GO:0005886">
    <property type="term" value="C:plasma membrane"/>
    <property type="evidence" value="ECO:0007669"/>
    <property type="project" value="UniProtKB-SubCell"/>
</dbReference>
<dbReference type="GO" id="GO:0045259">
    <property type="term" value="C:proton-transporting ATP synthase complex"/>
    <property type="evidence" value="ECO:0007669"/>
    <property type="project" value="UniProtKB-KW"/>
</dbReference>
<dbReference type="GO" id="GO:0046933">
    <property type="term" value="F:proton-transporting ATP synthase activity, rotational mechanism"/>
    <property type="evidence" value="ECO:0007669"/>
    <property type="project" value="UniProtKB-UniRule"/>
</dbReference>
<dbReference type="GO" id="GO:0046961">
    <property type="term" value="F:proton-transporting ATPase activity, rotational mechanism"/>
    <property type="evidence" value="ECO:0007669"/>
    <property type="project" value="TreeGrafter"/>
</dbReference>
<dbReference type="CDD" id="cd06503">
    <property type="entry name" value="ATP-synt_Fo_b"/>
    <property type="match status" value="1"/>
</dbReference>
<dbReference type="Gene3D" id="6.10.250.1580">
    <property type="match status" value="1"/>
</dbReference>
<dbReference type="HAMAP" id="MF_01398">
    <property type="entry name" value="ATP_synth_b_bprime"/>
    <property type="match status" value="1"/>
</dbReference>
<dbReference type="InterPro" id="IPR028987">
    <property type="entry name" value="ATP_synth_B-like_membr_sf"/>
</dbReference>
<dbReference type="InterPro" id="IPR002146">
    <property type="entry name" value="ATP_synth_b/b'su_bac/chlpt"/>
</dbReference>
<dbReference type="InterPro" id="IPR005864">
    <property type="entry name" value="ATP_synth_F0_bsu_bac"/>
</dbReference>
<dbReference type="InterPro" id="IPR050059">
    <property type="entry name" value="ATP_synthase_B_chain"/>
</dbReference>
<dbReference type="NCBIfam" id="TIGR01144">
    <property type="entry name" value="ATP_synt_b"/>
    <property type="match status" value="1"/>
</dbReference>
<dbReference type="NCBIfam" id="NF004411">
    <property type="entry name" value="PRK05759.1-2"/>
    <property type="match status" value="1"/>
</dbReference>
<dbReference type="PANTHER" id="PTHR33445:SF1">
    <property type="entry name" value="ATP SYNTHASE SUBUNIT B"/>
    <property type="match status" value="1"/>
</dbReference>
<dbReference type="PANTHER" id="PTHR33445">
    <property type="entry name" value="ATP SYNTHASE SUBUNIT B', CHLOROPLASTIC"/>
    <property type="match status" value="1"/>
</dbReference>
<dbReference type="Pfam" id="PF00430">
    <property type="entry name" value="ATP-synt_B"/>
    <property type="match status" value="1"/>
</dbReference>
<dbReference type="SUPFAM" id="SSF81573">
    <property type="entry name" value="F1F0 ATP synthase subunit B, membrane domain"/>
    <property type="match status" value="1"/>
</dbReference>
<feature type="chain" id="PRO_0000368687" description="ATP synthase subunit b">
    <location>
        <begin position="1"/>
        <end position="156"/>
    </location>
</feature>
<feature type="transmembrane region" description="Helical" evidence="1">
    <location>
        <begin position="12"/>
        <end position="32"/>
    </location>
</feature>
<protein>
    <recommendedName>
        <fullName evidence="1">ATP synthase subunit b</fullName>
    </recommendedName>
    <alternativeName>
        <fullName evidence="1">ATP synthase F(0) sector subunit b</fullName>
    </alternativeName>
    <alternativeName>
        <fullName evidence="1">ATPase subunit I</fullName>
    </alternativeName>
    <alternativeName>
        <fullName evidence="1">F-type ATPase subunit b</fullName>
        <shortName evidence="1">F-ATPase subunit b</shortName>
    </alternativeName>
</protein>